<organism>
    <name type="scientific">Neisseria meningitidis serogroup C / serotype 2a (strain ATCC 700532 / DSM 15464 / FAM18)</name>
    <dbReference type="NCBI Taxonomy" id="272831"/>
    <lineage>
        <taxon>Bacteria</taxon>
        <taxon>Pseudomonadati</taxon>
        <taxon>Pseudomonadota</taxon>
        <taxon>Betaproteobacteria</taxon>
        <taxon>Neisseriales</taxon>
        <taxon>Neisseriaceae</taxon>
        <taxon>Neisseria</taxon>
    </lineage>
</organism>
<name>LPXH_NEIMF</name>
<reference key="1">
    <citation type="journal article" date="2007" name="PLoS Genet.">
        <title>Meningococcal genetic variation mechanisms viewed through comparative analysis of serogroup C strain FAM18.</title>
        <authorList>
            <person name="Bentley S.D."/>
            <person name="Vernikos G.S."/>
            <person name="Snyder L.A.S."/>
            <person name="Churcher C."/>
            <person name="Arrowsmith C."/>
            <person name="Chillingworth T."/>
            <person name="Cronin A."/>
            <person name="Davis P.H."/>
            <person name="Holroyd N.E."/>
            <person name="Jagels K."/>
            <person name="Maddison M."/>
            <person name="Moule S."/>
            <person name="Rabbinowitsch E."/>
            <person name="Sharp S."/>
            <person name="Unwin L."/>
            <person name="Whitehead S."/>
            <person name="Quail M.A."/>
            <person name="Achtman M."/>
            <person name="Barrell B.G."/>
            <person name="Saunders N.J."/>
            <person name="Parkhill J."/>
        </authorList>
    </citation>
    <scope>NUCLEOTIDE SEQUENCE [LARGE SCALE GENOMIC DNA]</scope>
    <source>
        <strain>ATCC 700532 / DSM 15464 / FAM18</strain>
    </source>
</reference>
<evidence type="ECO:0000255" key="1">
    <source>
        <dbReference type="HAMAP-Rule" id="MF_00575"/>
    </source>
</evidence>
<keyword id="KW-0997">Cell inner membrane</keyword>
<keyword id="KW-1003">Cell membrane</keyword>
<keyword id="KW-0378">Hydrolase</keyword>
<keyword id="KW-0441">Lipid A biosynthesis</keyword>
<keyword id="KW-0444">Lipid biosynthesis</keyword>
<keyword id="KW-0443">Lipid metabolism</keyword>
<keyword id="KW-0464">Manganese</keyword>
<keyword id="KW-0472">Membrane</keyword>
<keyword id="KW-0479">Metal-binding</keyword>
<dbReference type="EC" id="3.6.1.54" evidence="1"/>
<dbReference type="EMBL" id="AM421808">
    <property type="protein sequence ID" value="CAM09783.1"/>
    <property type="molecule type" value="Genomic_DNA"/>
</dbReference>
<dbReference type="RefSeq" id="WP_002221383.1">
    <property type="nucleotide sequence ID" value="NC_008767.1"/>
</dbReference>
<dbReference type="SMR" id="A1KSF3"/>
<dbReference type="KEGG" id="nmc:NMC0483"/>
<dbReference type="HOGENOM" id="CLU_074586_0_0_4"/>
<dbReference type="UniPathway" id="UPA00359">
    <property type="reaction ID" value="UER00480"/>
</dbReference>
<dbReference type="Proteomes" id="UP000002286">
    <property type="component" value="Chromosome"/>
</dbReference>
<dbReference type="GO" id="GO:0005737">
    <property type="term" value="C:cytoplasm"/>
    <property type="evidence" value="ECO:0007669"/>
    <property type="project" value="InterPro"/>
</dbReference>
<dbReference type="GO" id="GO:0019897">
    <property type="term" value="C:extrinsic component of plasma membrane"/>
    <property type="evidence" value="ECO:0007669"/>
    <property type="project" value="UniProtKB-UniRule"/>
</dbReference>
<dbReference type="GO" id="GO:0030145">
    <property type="term" value="F:manganese ion binding"/>
    <property type="evidence" value="ECO:0007669"/>
    <property type="project" value="UniProtKB-UniRule"/>
</dbReference>
<dbReference type="GO" id="GO:0008758">
    <property type="term" value="F:UDP-2,3-diacylglucosamine hydrolase activity"/>
    <property type="evidence" value="ECO:0007669"/>
    <property type="project" value="UniProtKB-UniRule"/>
</dbReference>
<dbReference type="GO" id="GO:0009245">
    <property type="term" value="P:lipid A biosynthetic process"/>
    <property type="evidence" value="ECO:0007669"/>
    <property type="project" value="UniProtKB-UniRule"/>
</dbReference>
<dbReference type="CDD" id="cd07398">
    <property type="entry name" value="MPP_YbbF-LpxH"/>
    <property type="match status" value="1"/>
</dbReference>
<dbReference type="Gene3D" id="3.60.21.10">
    <property type="match status" value="1"/>
</dbReference>
<dbReference type="HAMAP" id="MF_00575">
    <property type="entry name" value="LpxH"/>
    <property type="match status" value="1"/>
</dbReference>
<dbReference type="InterPro" id="IPR004843">
    <property type="entry name" value="Calcineurin-like_PHP_ApaH"/>
</dbReference>
<dbReference type="InterPro" id="IPR043461">
    <property type="entry name" value="LpxH-like"/>
</dbReference>
<dbReference type="InterPro" id="IPR029052">
    <property type="entry name" value="Metallo-depent_PP-like"/>
</dbReference>
<dbReference type="InterPro" id="IPR010138">
    <property type="entry name" value="UDP-diacylglucosamine_Hdrlase"/>
</dbReference>
<dbReference type="NCBIfam" id="TIGR01854">
    <property type="entry name" value="lipid_A_lpxH"/>
    <property type="match status" value="1"/>
</dbReference>
<dbReference type="NCBIfam" id="NF003743">
    <property type="entry name" value="PRK05340.1"/>
    <property type="match status" value="1"/>
</dbReference>
<dbReference type="PANTHER" id="PTHR34990:SF1">
    <property type="entry name" value="UDP-2,3-DIACYLGLUCOSAMINE HYDROLASE"/>
    <property type="match status" value="1"/>
</dbReference>
<dbReference type="PANTHER" id="PTHR34990">
    <property type="entry name" value="UDP-2,3-DIACYLGLUCOSAMINE HYDROLASE-RELATED"/>
    <property type="match status" value="1"/>
</dbReference>
<dbReference type="Pfam" id="PF00149">
    <property type="entry name" value="Metallophos"/>
    <property type="match status" value="1"/>
</dbReference>
<dbReference type="SUPFAM" id="SSF56300">
    <property type="entry name" value="Metallo-dependent phosphatases"/>
    <property type="match status" value="1"/>
</dbReference>
<protein>
    <recommendedName>
        <fullName evidence="1">UDP-2,3-diacylglucosamine hydrolase</fullName>
        <ecNumber evidence="1">3.6.1.54</ecNumber>
    </recommendedName>
    <alternativeName>
        <fullName evidence="1">UDP-2,3-diacylglucosamine diphosphatase</fullName>
    </alternativeName>
</protein>
<sequence length="240" mass="27656">MKPAYFISDLHLSEKHPELTALLLRFLRSSAAGQARAVYILGDLFDFWVGDDEVSELNTSVAREIRKLSDKGVAVFFVRGNRDFLIGQDFCRQAGMTLLPDYSVLDLFGCKTLICHGDTLCTDDRAYQRFRKIVHRKRLQKLFLMLPLKWRTRLATKIRRVSKMEKQVKPADIMDVNAAFTARQVRAFGAERLIHGHTHREHIHHENGFTRIVLGDWHNDYASILRVDGDGAVFVPLEKY</sequence>
<accession>A1KSF3</accession>
<gene>
    <name evidence="1" type="primary">lpxH</name>
    <name type="ordered locus">NMC0483</name>
</gene>
<feature type="chain" id="PRO_1000025064" description="UDP-2,3-diacylglucosamine hydrolase">
    <location>
        <begin position="1"/>
        <end position="240"/>
    </location>
</feature>
<feature type="binding site" evidence="1">
    <location>
        <position position="9"/>
    </location>
    <ligand>
        <name>Mn(2+)</name>
        <dbReference type="ChEBI" id="CHEBI:29035"/>
        <label>1</label>
    </ligand>
</feature>
<feature type="binding site" evidence="1">
    <location>
        <position position="11"/>
    </location>
    <ligand>
        <name>Mn(2+)</name>
        <dbReference type="ChEBI" id="CHEBI:29035"/>
        <label>1</label>
    </ligand>
</feature>
<feature type="binding site" evidence="1">
    <location>
        <position position="43"/>
    </location>
    <ligand>
        <name>Mn(2+)</name>
        <dbReference type="ChEBI" id="CHEBI:29035"/>
        <label>1</label>
    </ligand>
</feature>
<feature type="binding site" evidence="1">
    <location>
        <position position="43"/>
    </location>
    <ligand>
        <name>Mn(2+)</name>
        <dbReference type="ChEBI" id="CHEBI:29035"/>
        <label>2</label>
    </ligand>
</feature>
<feature type="binding site" evidence="1">
    <location>
        <begin position="81"/>
        <end position="82"/>
    </location>
    <ligand>
        <name>substrate</name>
    </ligand>
</feature>
<feature type="binding site" evidence="1">
    <location>
        <position position="81"/>
    </location>
    <ligand>
        <name>Mn(2+)</name>
        <dbReference type="ChEBI" id="CHEBI:29035"/>
        <label>2</label>
    </ligand>
</feature>
<feature type="binding site" evidence="1">
    <location>
        <position position="116"/>
    </location>
    <ligand>
        <name>Mn(2+)</name>
        <dbReference type="ChEBI" id="CHEBI:29035"/>
        <label>2</label>
    </ligand>
</feature>
<feature type="binding site" evidence="1">
    <location>
        <position position="124"/>
    </location>
    <ligand>
        <name>substrate</name>
    </ligand>
</feature>
<feature type="binding site" evidence="1">
    <location>
        <position position="162"/>
    </location>
    <ligand>
        <name>substrate</name>
    </ligand>
</feature>
<feature type="binding site" evidence="1">
    <location>
        <position position="166"/>
    </location>
    <ligand>
        <name>substrate</name>
    </ligand>
</feature>
<feature type="binding site" evidence="1">
    <location>
        <position position="169"/>
    </location>
    <ligand>
        <name>substrate</name>
    </ligand>
</feature>
<feature type="binding site" evidence="1">
    <location>
        <position position="197"/>
    </location>
    <ligand>
        <name>Mn(2+)</name>
        <dbReference type="ChEBI" id="CHEBI:29035"/>
        <label>2</label>
    </ligand>
</feature>
<feature type="binding site" evidence="1">
    <location>
        <position position="197"/>
    </location>
    <ligand>
        <name>substrate</name>
    </ligand>
</feature>
<feature type="binding site" evidence="1">
    <location>
        <position position="199"/>
    </location>
    <ligand>
        <name>Mn(2+)</name>
        <dbReference type="ChEBI" id="CHEBI:29035"/>
        <label>1</label>
    </ligand>
</feature>
<comment type="function">
    <text evidence="1">Hydrolyzes the pyrophosphate bond of UDP-2,3-diacylglucosamine to yield 2,3-diacylglucosamine 1-phosphate (lipid X) and UMP by catalyzing the attack of water at the alpha-P atom. Involved in the biosynthesis of lipid A, a phosphorylated glycolipid that anchors the lipopolysaccharide to the outer membrane of the cell.</text>
</comment>
<comment type="catalytic activity">
    <reaction evidence="1">
        <text>UDP-2-N,3-O-bis[(3R)-3-hydroxytetradecanoyl]-alpha-D-glucosamine + H2O = 2-N,3-O-bis[(3R)-3-hydroxytetradecanoyl]-alpha-D-glucosaminyl 1-phosphate + UMP + 2 H(+)</text>
        <dbReference type="Rhea" id="RHEA:25213"/>
        <dbReference type="ChEBI" id="CHEBI:15377"/>
        <dbReference type="ChEBI" id="CHEBI:15378"/>
        <dbReference type="ChEBI" id="CHEBI:57865"/>
        <dbReference type="ChEBI" id="CHEBI:57957"/>
        <dbReference type="ChEBI" id="CHEBI:78847"/>
        <dbReference type="EC" id="3.6.1.54"/>
    </reaction>
</comment>
<comment type="cofactor">
    <cofactor evidence="1">
        <name>Mn(2+)</name>
        <dbReference type="ChEBI" id="CHEBI:29035"/>
    </cofactor>
    <text evidence="1">Binds 2 Mn(2+) ions per subunit in a binuclear metal center.</text>
</comment>
<comment type="pathway">
    <text evidence="1">Glycolipid biosynthesis; lipid IV(A) biosynthesis; lipid IV(A) from (3R)-3-hydroxytetradecanoyl-[acyl-carrier-protein] and UDP-N-acetyl-alpha-D-glucosamine: step 4/6.</text>
</comment>
<comment type="subcellular location">
    <subcellularLocation>
        <location evidence="1">Cell inner membrane</location>
        <topology evidence="1">Peripheral membrane protein</topology>
        <orientation evidence="1">Cytoplasmic side</orientation>
    </subcellularLocation>
</comment>
<comment type="similarity">
    <text evidence="1">Belongs to the LpxH family.</text>
</comment>
<proteinExistence type="inferred from homology"/>